<name>DNLJ_RUEST</name>
<proteinExistence type="inferred from homology"/>
<keyword id="KW-0227">DNA damage</keyword>
<keyword id="KW-0234">DNA repair</keyword>
<keyword id="KW-0235">DNA replication</keyword>
<keyword id="KW-0436">Ligase</keyword>
<keyword id="KW-0460">Magnesium</keyword>
<keyword id="KW-0464">Manganese</keyword>
<keyword id="KW-0479">Metal-binding</keyword>
<keyword id="KW-0520">NAD</keyword>
<keyword id="KW-1185">Reference proteome</keyword>
<keyword id="KW-0862">Zinc</keyword>
<organism>
    <name type="scientific">Ruegeria sp. (strain TM1040)</name>
    <name type="common">Silicibacter sp.</name>
    <dbReference type="NCBI Taxonomy" id="292414"/>
    <lineage>
        <taxon>Bacteria</taxon>
        <taxon>Pseudomonadati</taxon>
        <taxon>Pseudomonadota</taxon>
        <taxon>Alphaproteobacteria</taxon>
        <taxon>Rhodobacterales</taxon>
        <taxon>Roseobacteraceae</taxon>
        <taxon>Ruegeria</taxon>
    </lineage>
</organism>
<accession>Q1GGT5</accession>
<sequence length="739" mass="79737">MDEADARAEFEALQTKIEKADHDYHQKDAPTLSDADYDRLKRRYLALADAFPILAKDGTRVASVGAPAASGFGKVTHAQRMMSLGNAFEDQDVEDFAVGLRRYLGLSSEAPLAFTAEPKIDGLSLSLRYEAGKLVQAATRGDGAVGENVTENARTISDIPQEISGAPEVLEVRGEVYMSHADFEALNARHAETGGKIFANPRNAAAGSLRQLDAEITRARPLRFFAYSWGELSEPLAETQIDAIERLASLGFQTNPLTRCCEQISELLAHYHAIEEQRADLGYDIDGVVYKVNDLSLQERLGFRSTTPRWAIAHKFPAELAWTHLEGIDIQVGRTGALSPVARLHPVTVGGVVVSNATLHNEDYIAGLDSKGAPIRGGKDIRVGDWVQIYRAGDVIPKVADVDLSRRPEGTERYAFPTRCPRCDSPAVREEGDAVRRCSGGLICPAQAVEKLKHFVSRAAFDIEGLGAKQVEQFHSDGWVKEPADIFELQQRYGSGLQQLKNREGWGEKSASALFAAIEDKRRIEFARLIFGLGIRHVGEVAAKDLALHFRTWSALAEAADLARAAALAHRAADEAEIVERQEAQASARRAKISEARNAAVATCAVAPDSQAAWDDLISVDGLGPTVALSLSDAFANPEERAAFDRLIAHLEIIEPDAPADDSPVAGKTVVFTGTLEKMTRAEAKARAEALGAKVSGSVSKKTDILVAGPGAGSKAAKAAELGIQTLDEDGWLDLIGQA</sequence>
<dbReference type="EC" id="6.5.1.2" evidence="1"/>
<dbReference type="EMBL" id="CP000377">
    <property type="protein sequence ID" value="ABF64131.1"/>
    <property type="molecule type" value="Genomic_DNA"/>
</dbReference>
<dbReference type="RefSeq" id="WP_011538735.1">
    <property type="nucleotide sequence ID" value="NC_008044.1"/>
</dbReference>
<dbReference type="SMR" id="Q1GGT5"/>
<dbReference type="STRING" id="292414.TM1040_1398"/>
<dbReference type="KEGG" id="sit:TM1040_1398"/>
<dbReference type="eggNOG" id="COG0272">
    <property type="taxonomic scope" value="Bacteria"/>
</dbReference>
<dbReference type="HOGENOM" id="CLU_007764_2_1_5"/>
<dbReference type="OrthoDB" id="9759736at2"/>
<dbReference type="Proteomes" id="UP000000636">
    <property type="component" value="Chromosome"/>
</dbReference>
<dbReference type="GO" id="GO:0005829">
    <property type="term" value="C:cytosol"/>
    <property type="evidence" value="ECO:0007669"/>
    <property type="project" value="TreeGrafter"/>
</dbReference>
<dbReference type="GO" id="GO:0003911">
    <property type="term" value="F:DNA ligase (NAD+) activity"/>
    <property type="evidence" value="ECO:0007669"/>
    <property type="project" value="UniProtKB-UniRule"/>
</dbReference>
<dbReference type="GO" id="GO:0046872">
    <property type="term" value="F:metal ion binding"/>
    <property type="evidence" value="ECO:0007669"/>
    <property type="project" value="UniProtKB-KW"/>
</dbReference>
<dbReference type="GO" id="GO:0006281">
    <property type="term" value="P:DNA repair"/>
    <property type="evidence" value="ECO:0007669"/>
    <property type="project" value="UniProtKB-KW"/>
</dbReference>
<dbReference type="GO" id="GO:0006260">
    <property type="term" value="P:DNA replication"/>
    <property type="evidence" value="ECO:0007669"/>
    <property type="project" value="UniProtKB-KW"/>
</dbReference>
<dbReference type="CDD" id="cd17748">
    <property type="entry name" value="BRCT_DNA_ligase_like"/>
    <property type="match status" value="1"/>
</dbReference>
<dbReference type="CDD" id="cd00114">
    <property type="entry name" value="LIGANc"/>
    <property type="match status" value="1"/>
</dbReference>
<dbReference type="FunFam" id="1.10.150.20:FF:000007">
    <property type="entry name" value="DNA ligase"/>
    <property type="match status" value="1"/>
</dbReference>
<dbReference type="FunFam" id="3.30.470.30:FF:000001">
    <property type="entry name" value="DNA ligase"/>
    <property type="match status" value="1"/>
</dbReference>
<dbReference type="Gene3D" id="6.20.10.30">
    <property type="match status" value="1"/>
</dbReference>
<dbReference type="Gene3D" id="1.10.150.20">
    <property type="entry name" value="5' to 3' exonuclease, C-terminal subdomain"/>
    <property type="match status" value="2"/>
</dbReference>
<dbReference type="Gene3D" id="3.40.50.10190">
    <property type="entry name" value="BRCT domain"/>
    <property type="match status" value="1"/>
</dbReference>
<dbReference type="Gene3D" id="3.30.470.30">
    <property type="entry name" value="DNA ligase/mRNA capping enzyme"/>
    <property type="match status" value="1"/>
</dbReference>
<dbReference type="Gene3D" id="1.10.287.610">
    <property type="entry name" value="Helix hairpin bin"/>
    <property type="match status" value="1"/>
</dbReference>
<dbReference type="Gene3D" id="2.40.50.140">
    <property type="entry name" value="Nucleic acid-binding proteins"/>
    <property type="match status" value="1"/>
</dbReference>
<dbReference type="HAMAP" id="MF_01588">
    <property type="entry name" value="DNA_ligase_A"/>
    <property type="match status" value="1"/>
</dbReference>
<dbReference type="InterPro" id="IPR001357">
    <property type="entry name" value="BRCT_dom"/>
</dbReference>
<dbReference type="InterPro" id="IPR036420">
    <property type="entry name" value="BRCT_dom_sf"/>
</dbReference>
<dbReference type="InterPro" id="IPR041663">
    <property type="entry name" value="DisA/LigA_HHH"/>
</dbReference>
<dbReference type="InterPro" id="IPR001679">
    <property type="entry name" value="DNA_ligase"/>
</dbReference>
<dbReference type="InterPro" id="IPR018239">
    <property type="entry name" value="DNA_ligase_AS"/>
</dbReference>
<dbReference type="InterPro" id="IPR033136">
    <property type="entry name" value="DNA_ligase_CS"/>
</dbReference>
<dbReference type="InterPro" id="IPR013839">
    <property type="entry name" value="DNAligase_adenylation"/>
</dbReference>
<dbReference type="InterPro" id="IPR013840">
    <property type="entry name" value="DNAligase_N"/>
</dbReference>
<dbReference type="InterPro" id="IPR012340">
    <property type="entry name" value="NA-bd_OB-fold"/>
</dbReference>
<dbReference type="InterPro" id="IPR004150">
    <property type="entry name" value="NAD_DNA_ligase_OB"/>
</dbReference>
<dbReference type="InterPro" id="IPR010994">
    <property type="entry name" value="RuvA_2-like"/>
</dbReference>
<dbReference type="InterPro" id="IPR004149">
    <property type="entry name" value="Znf_DNAligase_C4"/>
</dbReference>
<dbReference type="NCBIfam" id="TIGR00575">
    <property type="entry name" value="dnlj"/>
    <property type="match status" value="1"/>
</dbReference>
<dbReference type="NCBIfam" id="NF005932">
    <property type="entry name" value="PRK07956.1"/>
    <property type="match status" value="1"/>
</dbReference>
<dbReference type="PANTHER" id="PTHR23389">
    <property type="entry name" value="CHROMOSOME TRANSMISSION FIDELITY FACTOR 18"/>
    <property type="match status" value="1"/>
</dbReference>
<dbReference type="PANTHER" id="PTHR23389:SF9">
    <property type="entry name" value="DNA LIGASE"/>
    <property type="match status" value="1"/>
</dbReference>
<dbReference type="Pfam" id="PF00533">
    <property type="entry name" value="BRCT"/>
    <property type="match status" value="1"/>
</dbReference>
<dbReference type="Pfam" id="PF01653">
    <property type="entry name" value="DNA_ligase_aden"/>
    <property type="match status" value="1"/>
</dbReference>
<dbReference type="Pfam" id="PF03120">
    <property type="entry name" value="DNA_ligase_OB"/>
    <property type="match status" value="1"/>
</dbReference>
<dbReference type="Pfam" id="PF03119">
    <property type="entry name" value="DNA_ligase_ZBD"/>
    <property type="match status" value="1"/>
</dbReference>
<dbReference type="Pfam" id="PF12826">
    <property type="entry name" value="HHH_2"/>
    <property type="match status" value="1"/>
</dbReference>
<dbReference type="PIRSF" id="PIRSF001604">
    <property type="entry name" value="LigA"/>
    <property type="match status" value="1"/>
</dbReference>
<dbReference type="SMART" id="SM00292">
    <property type="entry name" value="BRCT"/>
    <property type="match status" value="1"/>
</dbReference>
<dbReference type="SMART" id="SM00532">
    <property type="entry name" value="LIGANc"/>
    <property type="match status" value="1"/>
</dbReference>
<dbReference type="SUPFAM" id="SSF52113">
    <property type="entry name" value="BRCT domain"/>
    <property type="match status" value="1"/>
</dbReference>
<dbReference type="SUPFAM" id="SSF56091">
    <property type="entry name" value="DNA ligase/mRNA capping enzyme, catalytic domain"/>
    <property type="match status" value="1"/>
</dbReference>
<dbReference type="SUPFAM" id="SSF50249">
    <property type="entry name" value="Nucleic acid-binding proteins"/>
    <property type="match status" value="1"/>
</dbReference>
<dbReference type="SUPFAM" id="SSF47781">
    <property type="entry name" value="RuvA domain 2-like"/>
    <property type="match status" value="1"/>
</dbReference>
<dbReference type="PROSITE" id="PS50172">
    <property type="entry name" value="BRCT"/>
    <property type="match status" value="1"/>
</dbReference>
<dbReference type="PROSITE" id="PS01055">
    <property type="entry name" value="DNA_LIGASE_N1"/>
    <property type="match status" value="1"/>
</dbReference>
<dbReference type="PROSITE" id="PS01056">
    <property type="entry name" value="DNA_LIGASE_N2"/>
    <property type="match status" value="1"/>
</dbReference>
<comment type="function">
    <text evidence="1">DNA ligase that catalyzes the formation of phosphodiester linkages between 5'-phosphoryl and 3'-hydroxyl groups in double-stranded DNA using NAD as a coenzyme and as the energy source for the reaction. It is essential for DNA replication and repair of damaged DNA.</text>
</comment>
<comment type="catalytic activity">
    <reaction evidence="1">
        <text>NAD(+) + (deoxyribonucleotide)n-3'-hydroxyl + 5'-phospho-(deoxyribonucleotide)m = (deoxyribonucleotide)n+m + AMP + beta-nicotinamide D-nucleotide.</text>
        <dbReference type="EC" id="6.5.1.2"/>
    </reaction>
</comment>
<comment type="cofactor">
    <cofactor evidence="1">
        <name>Mg(2+)</name>
        <dbReference type="ChEBI" id="CHEBI:18420"/>
    </cofactor>
    <cofactor evidence="1">
        <name>Mn(2+)</name>
        <dbReference type="ChEBI" id="CHEBI:29035"/>
    </cofactor>
</comment>
<comment type="similarity">
    <text evidence="1">Belongs to the NAD-dependent DNA ligase family. LigA subfamily.</text>
</comment>
<feature type="chain" id="PRO_0000313440" description="DNA ligase">
    <location>
        <begin position="1"/>
        <end position="739"/>
    </location>
</feature>
<feature type="domain" description="BRCT" evidence="1">
    <location>
        <begin position="660"/>
        <end position="739"/>
    </location>
</feature>
<feature type="active site" description="N6-AMP-lysine intermediate" evidence="1">
    <location>
        <position position="119"/>
    </location>
</feature>
<feature type="binding site" evidence="1">
    <location>
        <begin position="34"/>
        <end position="38"/>
    </location>
    <ligand>
        <name>NAD(+)</name>
        <dbReference type="ChEBI" id="CHEBI:57540"/>
    </ligand>
</feature>
<feature type="binding site" evidence="1">
    <location>
        <begin position="83"/>
        <end position="84"/>
    </location>
    <ligand>
        <name>NAD(+)</name>
        <dbReference type="ChEBI" id="CHEBI:57540"/>
    </ligand>
</feature>
<feature type="binding site" evidence="1">
    <location>
        <position position="117"/>
    </location>
    <ligand>
        <name>NAD(+)</name>
        <dbReference type="ChEBI" id="CHEBI:57540"/>
    </ligand>
</feature>
<feature type="binding site" evidence="1">
    <location>
        <position position="140"/>
    </location>
    <ligand>
        <name>NAD(+)</name>
        <dbReference type="ChEBI" id="CHEBI:57540"/>
    </ligand>
</feature>
<feature type="binding site" evidence="1">
    <location>
        <position position="175"/>
    </location>
    <ligand>
        <name>NAD(+)</name>
        <dbReference type="ChEBI" id="CHEBI:57540"/>
    </ligand>
</feature>
<feature type="binding site" evidence="1">
    <location>
        <position position="291"/>
    </location>
    <ligand>
        <name>NAD(+)</name>
        <dbReference type="ChEBI" id="CHEBI:57540"/>
    </ligand>
</feature>
<feature type="binding site" evidence="1">
    <location>
        <position position="315"/>
    </location>
    <ligand>
        <name>NAD(+)</name>
        <dbReference type="ChEBI" id="CHEBI:57540"/>
    </ligand>
</feature>
<feature type="binding site" evidence="1">
    <location>
        <position position="420"/>
    </location>
    <ligand>
        <name>Zn(2+)</name>
        <dbReference type="ChEBI" id="CHEBI:29105"/>
    </ligand>
</feature>
<feature type="binding site" evidence="1">
    <location>
        <position position="423"/>
    </location>
    <ligand>
        <name>Zn(2+)</name>
        <dbReference type="ChEBI" id="CHEBI:29105"/>
    </ligand>
</feature>
<feature type="binding site" evidence="1">
    <location>
        <position position="438"/>
    </location>
    <ligand>
        <name>Zn(2+)</name>
        <dbReference type="ChEBI" id="CHEBI:29105"/>
    </ligand>
</feature>
<feature type="binding site" evidence="1">
    <location>
        <position position="444"/>
    </location>
    <ligand>
        <name>Zn(2+)</name>
        <dbReference type="ChEBI" id="CHEBI:29105"/>
    </ligand>
</feature>
<gene>
    <name evidence="1" type="primary">ligA</name>
    <name type="ordered locus">TM1040_1398</name>
</gene>
<protein>
    <recommendedName>
        <fullName evidence="1">DNA ligase</fullName>
        <ecNumber evidence="1">6.5.1.2</ecNumber>
    </recommendedName>
    <alternativeName>
        <fullName evidence="1">Polydeoxyribonucleotide synthase [NAD(+)]</fullName>
    </alternativeName>
</protein>
<reference key="1">
    <citation type="submission" date="2006-05" db="EMBL/GenBank/DDBJ databases">
        <title>Complete sequence of chromosome of Silicibacter sp. TM1040.</title>
        <authorList>
            <consortium name="US DOE Joint Genome Institute"/>
            <person name="Copeland A."/>
            <person name="Lucas S."/>
            <person name="Lapidus A."/>
            <person name="Barry K."/>
            <person name="Detter J.C."/>
            <person name="Glavina del Rio T."/>
            <person name="Hammon N."/>
            <person name="Israni S."/>
            <person name="Dalin E."/>
            <person name="Tice H."/>
            <person name="Pitluck S."/>
            <person name="Brettin T."/>
            <person name="Bruce D."/>
            <person name="Han C."/>
            <person name="Tapia R."/>
            <person name="Goodwin L."/>
            <person name="Thompson L.S."/>
            <person name="Gilna P."/>
            <person name="Schmutz J."/>
            <person name="Larimer F."/>
            <person name="Land M."/>
            <person name="Hauser L."/>
            <person name="Kyrpides N."/>
            <person name="Kim E."/>
            <person name="Belas R."/>
            <person name="Moran M.A."/>
            <person name="Buchan A."/>
            <person name="Gonzalez J.M."/>
            <person name="Schell M.A."/>
            <person name="Sun F."/>
            <person name="Richardson P."/>
        </authorList>
    </citation>
    <scope>NUCLEOTIDE SEQUENCE [LARGE SCALE GENOMIC DNA]</scope>
    <source>
        <strain>TM1040</strain>
    </source>
</reference>
<evidence type="ECO:0000255" key="1">
    <source>
        <dbReference type="HAMAP-Rule" id="MF_01588"/>
    </source>
</evidence>